<comment type="function">
    <text evidence="1">One of two assembly initiator proteins, it binds directly to the 5'-end of the 23S rRNA, where it nucleates assembly of the 50S subunit.</text>
</comment>
<comment type="subunit">
    <text evidence="1">Part of the 50S ribosomal subunit.</text>
</comment>
<comment type="subcellular location">
    <subcellularLocation>
        <location>Plastid</location>
        <location>Chloroplast</location>
    </subcellularLocation>
</comment>
<comment type="similarity">
    <text evidence="2">Belongs to the universal ribosomal protein uL24 family.</text>
</comment>
<sequence>MKKLTKTNLKYKKQSLKIGDLVEIIAGNDKKKQGTVKAIIKSQEKVIVEGINQRFKHIKPQRSNETGKINQFEAPIHRSNVKKINN</sequence>
<proteinExistence type="inferred from homology"/>
<evidence type="ECO:0000250" key="1"/>
<evidence type="ECO:0000305" key="2"/>
<dbReference type="EMBL" id="EU168191">
    <property type="protein sequence ID" value="ABV70183.1"/>
    <property type="molecule type" value="Genomic_DNA"/>
</dbReference>
<dbReference type="RefSeq" id="YP_001936436.1">
    <property type="nucleotide sequence ID" value="NC_010772.1"/>
</dbReference>
<dbReference type="SMR" id="B2XTV0"/>
<dbReference type="GeneID" id="6335559"/>
<dbReference type="GO" id="GO:0009507">
    <property type="term" value="C:chloroplast"/>
    <property type="evidence" value="ECO:0007669"/>
    <property type="project" value="UniProtKB-SubCell"/>
</dbReference>
<dbReference type="GO" id="GO:1990904">
    <property type="term" value="C:ribonucleoprotein complex"/>
    <property type="evidence" value="ECO:0007669"/>
    <property type="project" value="UniProtKB-KW"/>
</dbReference>
<dbReference type="GO" id="GO:0005840">
    <property type="term" value="C:ribosome"/>
    <property type="evidence" value="ECO:0007669"/>
    <property type="project" value="UniProtKB-KW"/>
</dbReference>
<dbReference type="GO" id="GO:0019843">
    <property type="term" value="F:rRNA binding"/>
    <property type="evidence" value="ECO:0007669"/>
    <property type="project" value="UniProtKB-UniRule"/>
</dbReference>
<dbReference type="GO" id="GO:0003735">
    <property type="term" value="F:structural constituent of ribosome"/>
    <property type="evidence" value="ECO:0007669"/>
    <property type="project" value="InterPro"/>
</dbReference>
<dbReference type="GO" id="GO:0006412">
    <property type="term" value="P:translation"/>
    <property type="evidence" value="ECO:0007669"/>
    <property type="project" value="UniProtKB-UniRule"/>
</dbReference>
<dbReference type="CDD" id="cd06089">
    <property type="entry name" value="KOW_RPL26"/>
    <property type="match status" value="1"/>
</dbReference>
<dbReference type="Gene3D" id="2.30.30.30">
    <property type="match status" value="1"/>
</dbReference>
<dbReference type="HAMAP" id="MF_01326_B">
    <property type="entry name" value="Ribosomal_uL24_B"/>
    <property type="match status" value="1"/>
</dbReference>
<dbReference type="InterPro" id="IPR005824">
    <property type="entry name" value="KOW"/>
</dbReference>
<dbReference type="InterPro" id="IPR014722">
    <property type="entry name" value="Rib_uL2_dom2"/>
</dbReference>
<dbReference type="InterPro" id="IPR003256">
    <property type="entry name" value="Ribosomal_uL24"/>
</dbReference>
<dbReference type="InterPro" id="IPR005825">
    <property type="entry name" value="Ribosomal_uL24_CS"/>
</dbReference>
<dbReference type="InterPro" id="IPR041988">
    <property type="entry name" value="Ribosomal_uL24_KOW"/>
</dbReference>
<dbReference type="InterPro" id="IPR008991">
    <property type="entry name" value="Translation_prot_SH3-like_sf"/>
</dbReference>
<dbReference type="NCBIfam" id="TIGR01079">
    <property type="entry name" value="rplX_bact"/>
    <property type="match status" value="1"/>
</dbReference>
<dbReference type="PANTHER" id="PTHR12903">
    <property type="entry name" value="MITOCHONDRIAL RIBOSOMAL PROTEIN L24"/>
    <property type="match status" value="1"/>
</dbReference>
<dbReference type="Pfam" id="PF17136">
    <property type="entry name" value="ribosomal_L24"/>
    <property type="match status" value="1"/>
</dbReference>
<dbReference type="SMART" id="SM00739">
    <property type="entry name" value="KOW"/>
    <property type="match status" value="1"/>
</dbReference>
<dbReference type="SUPFAM" id="SSF50104">
    <property type="entry name" value="Translation proteins SH3-like domain"/>
    <property type="match status" value="1"/>
</dbReference>
<dbReference type="PROSITE" id="PS01108">
    <property type="entry name" value="RIBOSOMAL_L24"/>
    <property type="match status" value="1"/>
</dbReference>
<geneLocation type="chloroplast"/>
<feature type="chain" id="PRO_0000355744" description="Large ribosomal subunit protein uL24c">
    <location>
        <begin position="1"/>
        <end position="86"/>
    </location>
</feature>
<protein>
    <recommendedName>
        <fullName evidence="2">Large ribosomal subunit protein uL24c</fullName>
    </recommendedName>
    <alternativeName>
        <fullName>50S ribosomal protein L24, chloroplastic</fullName>
    </alternativeName>
</protein>
<organism>
    <name type="scientific">Heterosigma akashiwo (strain CCMP452 / OLISTH)</name>
    <dbReference type="NCBI Taxonomy" id="536046"/>
    <lineage>
        <taxon>Eukaryota</taxon>
        <taxon>Sar</taxon>
        <taxon>Stramenopiles</taxon>
        <taxon>Ochrophyta</taxon>
        <taxon>Raphidophyceae</taxon>
        <taxon>Chattonellales</taxon>
        <taxon>Chattonellaceae</taxon>
        <taxon>Heterosigma</taxon>
    </lineage>
</organism>
<reference key="1">
    <citation type="journal article" date="2008" name="BMC Genomics">
        <title>Chloroplast genome sequencing analysis of Heterosigma akashiwo CCMP452 (West Atlantic) and NIES293 (West Pacific) strains.</title>
        <authorList>
            <person name="Cattolico R.A."/>
            <person name="Jacobs M.A."/>
            <person name="Zhou Y."/>
            <person name="Chang J."/>
            <person name="Duplessis M."/>
            <person name="Lybrand T."/>
            <person name="McKay J."/>
            <person name="Ong H.C."/>
            <person name="Sims E."/>
            <person name="Rocap G."/>
        </authorList>
    </citation>
    <scope>NUCLEOTIDE SEQUENCE [LARGE SCALE GENOMIC DNA]</scope>
</reference>
<keyword id="KW-0150">Chloroplast</keyword>
<keyword id="KW-0934">Plastid</keyword>
<keyword id="KW-0687">Ribonucleoprotein</keyword>
<keyword id="KW-0689">Ribosomal protein</keyword>
<keyword id="KW-0694">RNA-binding</keyword>
<keyword id="KW-0699">rRNA-binding</keyword>
<name>RK24_HETA4</name>
<accession>B2XTV0</accession>
<gene>
    <name type="primary">rpl24</name>
    <name type="ordered locus">Heak452_Cp135</name>
</gene>